<protein>
    <recommendedName>
        <fullName>UDP-glucose 6-dehydrogenase</fullName>
        <shortName>UDP-Glc dehydrogenase</shortName>
        <shortName>UDP-GlcDH</shortName>
        <shortName>UDPGDH</shortName>
        <ecNumber evidence="1">1.1.1.22</ecNumber>
    </recommendedName>
</protein>
<sequence>MVEIKKICCIGAGYVGGPTCSVIARMCPEIRVTVVDVNEARINAWNSPTLPIYEPGLKEVVESCRGKNLFFSTNIDDAIREADLVFISVNTPTKTYGMGKGRAADLKYIEACARRIVQNSNGYKIVTEKSTVPVRAAESIRRIFDANTKPNLNLQVLSNPEFLAEGTAIKDLKNPDRVLIGGDETPEGQRAVQALCAVYEHWVPKEKILTTNTWSSELSKLAANAFLAQRISSINSISALCESTGADVEEVATAIGMDQRIGNKFLKASVGFGGGCFQKDVLNLVYLCEALNLPEVARYWQQVIDMNDYQRRRFASRIIDSLFNTVTDKKIAILGFAFKKDTGDTRESSSIYISKYLMDEGAHLHIYDPKVPREQIVVDLSHPGVSADDQVSRLVTISKDPYEACDGAHALVICTEWDMFKELDYERIHKRMLKPAFIFDGRRVLDGLHNELQTIGFQIETIGKKVSSKRIPYTPGEIPKFSLQDPPNKKPKV</sequence>
<evidence type="ECO:0000250" key="1">
    <source>
        <dbReference type="UniProtKB" id="O60701"/>
    </source>
</evidence>
<evidence type="ECO:0000250" key="2">
    <source>
        <dbReference type="UniProtKB" id="O70475"/>
    </source>
</evidence>
<evidence type="ECO:0000305" key="3"/>
<evidence type="ECO:0007744" key="4">
    <source>
    </source>
</evidence>
<gene>
    <name type="primary">Ugdh</name>
</gene>
<reference key="1">
    <citation type="submission" date="1998-05" db="EMBL/GenBank/DDBJ databases">
        <title>cDNA cloning of rat UDP-glucose dehydrogenase.</title>
        <authorList>
            <person name="Kobayashi T."/>
            <person name="Yokota H."/>
            <person name="Yuasa A."/>
        </authorList>
    </citation>
    <scope>NUCLEOTIDE SEQUENCE [MRNA]</scope>
    <source>
        <strain>Wistar</strain>
        <tissue>Liver</tissue>
    </source>
</reference>
<reference key="2">
    <citation type="journal article" date="2012" name="Nat. Commun.">
        <title>Quantitative maps of protein phosphorylation sites across 14 different rat organs and tissues.</title>
        <authorList>
            <person name="Lundby A."/>
            <person name="Secher A."/>
            <person name="Lage K."/>
            <person name="Nordsborg N.B."/>
            <person name="Dmytriyev A."/>
            <person name="Lundby C."/>
            <person name="Olsen J.V."/>
        </authorList>
    </citation>
    <scope>PHOSPHORYLATION [LARGE SCALE ANALYSIS] AT THR-474</scope>
    <scope>IDENTIFICATION BY MASS SPECTROMETRY [LARGE SCALE ANALYSIS]</scope>
</reference>
<dbReference type="EC" id="1.1.1.22" evidence="1"/>
<dbReference type="EMBL" id="AB013732">
    <property type="protein sequence ID" value="BAA28215.1"/>
    <property type="molecule type" value="mRNA"/>
</dbReference>
<dbReference type="RefSeq" id="NP_112615.1">
    <property type="nucleotide sequence ID" value="NM_031325.1"/>
</dbReference>
<dbReference type="SMR" id="O70199"/>
<dbReference type="FunCoup" id="O70199">
    <property type="interactions" value="1893"/>
</dbReference>
<dbReference type="STRING" id="10116.ENSRNOP00000003691"/>
<dbReference type="ChEMBL" id="CHEMBL4523146"/>
<dbReference type="GlyGen" id="O70199">
    <property type="glycosylation" value="1 site"/>
</dbReference>
<dbReference type="iPTMnet" id="O70199"/>
<dbReference type="PhosphoSitePlus" id="O70199"/>
<dbReference type="PaxDb" id="10116-ENSRNOP00000003691"/>
<dbReference type="GeneID" id="83472"/>
<dbReference type="KEGG" id="rno:83472"/>
<dbReference type="UCSC" id="RGD:621879">
    <property type="organism name" value="rat"/>
</dbReference>
<dbReference type="AGR" id="RGD:621879"/>
<dbReference type="CTD" id="7358"/>
<dbReference type="RGD" id="621879">
    <property type="gene designation" value="Ugdh"/>
</dbReference>
<dbReference type="eggNOG" id="KOG2666">
    <property type="taxonomic scope" value="Eukaryota"/>
</dbReference>
<dbReference type="InParanoid" id="O70199"/>
<dbReference type="PhylomeDB" id="O70199"/>
<dbReference type="BRENDA" id="1.1.1.22">
    <property type="organism ID" value="5301"/>
</dbReference>
<dbReference type="Reactome" id="R-RNO-173599">
    <property type="pathway name" value="Formation of the active cofactor, UDP-glucuronate"/>
</dbReference>
<dbReference type="UniPathway" id="UPA00038">
    <property type="reaction ID" value="UER00491"/>
</dbReference>
<dbReference type="PRO" id="PR:O70199"/>
<dbReference type="Proteomes" id="UP000002494">
    <property type="component" value="Unplaced"/>
</dbReference>
<dbReference type="GO" id="GO:0005634">
    <property type="term" value="C:nucleus"/>
    <property type="evidence" value="ECO:0000318"/>
    <property type="project" value="GO_Central"/>
</dbReference>
<dbReference type="GO" id="GO:0042802">
    <property type="term" value="F:identical protein binding"/>
    <property type="evidence" value="ECO:0000266"/>
    <property type="project" value="RGD"/>
</dbReference>
<dbReference type="GO" id="GO:0051287">
    <property type="term" value="F:NAD binding"/>
    <property type="evidence" value="ECO:0007669"/>
    <property type="project" value="InterPro"/>
</dbReference>
<dbReference type="GO" id="GO:0003979">
    <property type="term" value="F:UDP-glucose 6-dehydrogenase activity"/>
    <property type="evidence" value="ECO:0000314"/>
    <property type="project" value="RGD"/>
</dbReference>
<dbReference type="GO" id="GO:0050650">
    <property type="term" value="P:chondroitin sulfate proteoglycan biosynthetic process"/>
    <property type="evidence" value="ECO:0000250"/>
    <property type="project" value="UniProtKB"/>
</dbReference>
<dbReference type="GO" id="GO:0001702">
    <property type="term" value="P:gastrulation with mouth forming second"/>
    <property type="evidence" value="ECO:0000250"/>
    <property type="project" value="UniProtKB"/>
</dbReference>
<dbReference type="GO" id="GO:0006024">
    <property type="term" value="P:glycosaminoglycan biosynthetic process"/>
    <property type="evidence" value="ECO:0000318"/>
    <property type="project" value="GO_Central"/>
</dbReference>
<dbReference type="GO" id="GO:0015012">
    <property type="term" value="P:heparan sulfate proteoglycan biosynthetic process"/>
    <property type="evidence" value="ECO:0000250"/>
    <property type="project" value="UniProtKB"/>
</dbReference>
<dbReference type="GO" id="GO:0048666">
    <property type="term" value="P:neuron development"/>
    <property type="evidence" value="ECO:0000250"/>
    <property type="project" value="UniProtKB"/>
</dbReference>
<dbReference type="GO" id="GO:0034214">
    <property type="term" value="P:protein hexamerization"/>
    <property type="evidence" value="ECO:0000250"/>
    <property type="project" value="UniProtKB"/>
</dbReference>
<dbReference type="GO" id="GO:0006065">
    <property type="term" value="P:UDP-glucuronate biosynthetic process"/>
    <property type="evidence" value="ECO:0000250"/>
    <property type="project" value="UniProtKB"/>
</dbReference>
<dbReference type="FunFam" id="1.20.5.100:FF:000001">
    <property type="entry name" value="UDP-glucose 6-dehydrogenase"/>
    <property type="match status" value="1"/>
</dbReference>
<dbReference type="FunFam" id="3.40.50.720:FF:000032">
    <property type="entry name" value="UDP-glucose 6-dehydrogenase"/>
    <property type="match status" value="1"/>
</dbReference>
<dbReference type="FunFam" id="3.40.50.720:FF:000114">
    <property type="entry name" value="UDP-glucose 6-dehydrogenase"/>
    <property type="match status" value="1"/>
</dbReference>
<dbReference type="Gene3D" id="1.20.5.100">
    <property type="entry name" value="Cytochrome c1, transmembrane anchor, C-terminal"/>
    <property type="match status" value="1"/>
</dbReference>
<dbReference type="Gene3D" id="3.40.50.720">
    <property type="entry name" value="NAD(P)-binding Rossmann-like Domain"/>
    <property type="match status" value="2"/>
</dbReference>
<dbReference type="InterPro" id="IPR008927">
    <property type="entry name" value="6-PGluconate_DH-like_C_sf"/>
</dbReference>
<dbReference type="InterPro" id="IPR036291">
    <property type="entry name" value="NAD(P)-bd_dom_sf"/>
</dbReference>
<dbReference type="InterPro" id="IPR017476">
    <property type="entry name" value="UDP-Glc/GDP-Man"/>
</dbReference>
<dbReference type="InterPro" id="IPR014027">
    <property type="entry name" value="UDP-Glc/GDP-Man_DH_C"/>
</dbReference>
<dbReference type="InterPro" id="IPR036220">
    <property type="entry name" value="UDP-Glc/GDP-Man_DH_C_sf"/>
</dbReference>
<dbReference type="InterPro" id="IPR014026">
    <property type="entry name" value="UDP-Glc/GDP-Man_DH_dimer"/>
</dbReference>
<dbReference type="InterPro" id="IPR001732">
    <property type="entry name" value="UDP-Glc/GDP-Man_DH_N"/>
</dbReference>
<dbReference type="InterPro" id="IPR028356">
    <property type="entry name" value="UDPglc_DH_euk"/>
</dbReference>
<dbReference type="NCBIfam" id="TIGR03026">
    <property type="entry name" value="NDP-sugDHase"/>
    <property type="match status" value="1"/>
</dbReference>
<dbReference type="PANTHER" id="PTHR11374:SF59">
    <property type="entry name" value="UDP-GLUCOSE 6-DEHYDROGENASE"/>
    <property type="match status" value="1"/>
</dbReference>
<dbReference type="PANTHER" id="PTHR11374">
    <property type="entry name" value="UDP-GLUCOSE DEHYDROGENASE/UDP-MANNAC DEHYDROGENASE"/>
    <property type="match status" value="1"/>
</dbReference>
<dbReference type="Pfam" id="PF00984">
    <property type="entry name" value="UDPG_MGDP_dh"/>
    <property type="match status" value="1"/>
</dbReference>
<dbReference type="Pfam" id="PF03720">
    <property type="entry name" value="UDPG_MGDP_dh_C"/>
    <property type="match status" value="1"/>
</dbReference>
<dbReference type="Pfam" id="PF03721">
    <property type="entry name" value="UDPG_MGDP_dh_N"/>
    <property type="match status" value="1"/>
</dbReference>
<dbReference type="PIRSF" id="PIRSF500133">
    <property type="entry name" value="UDPglc_DH_euk"/>
    <property type="match status" value="1"/>
</dbReference>
<dbReference type="PIRSF" id="PIRSF000124">
    <property type="entry name" value="UDPglc_GDPman_dh"/>
    <property type="match status" value="1"/>
</dbReference>
<dbReference type="SMART" id="SM00984">
    <property type="entry name" value="UDPG_MGDP_dh_C"/>
    <property type="match status" value="1"/>
</dbReference>
<dbReference type="SUPFAM" id="SSF48179">
    <property type="entry name" value="6-phosphogluconate dehydrogenase C-terminal domain-like"/>
    <property type="match status" value="1"/>
</dbReference>
<dbReference type="SUPFAM" id="SSF51735">
    <property type="entry name" value="NAD(P)-binding Rossmann-fold domains"/>
    <property type="match status" value="1"/>
</dbReference>
<dbReference type="SUPFAM" id="SSF52413">
    <property type="entry name" value="UDP-glucose/GDP-mannose dehydrogenase C-terminal domain"/>
    <property type="match status" value="1"/>
</dbReference>
<name>UGDH_RAT</name>
<feature type="chain" id="PRO_0000074062" description="UDP-glucose 6-dehydrogenase">
    <location>
        <begin position="1"/>
        <end position="493"/>
    </location>
</feature>
<feature type="region of interest" description="Disordered" evidence="1">
    <location>
        <begin position="88"/>
        <end position="110"/>
    </location>
</feature>
<feature type="region of interest" description="Allosteric switch region" evidence="1">
    <location>
        <begin position="129"/>
        <end position="135"/>
    </location>
</feature>
<feature type="region of interest" description="Important for formation of active hexamer structure" evidence="1">
    <location>
        <begin position="321"/>
        <end position="325"/>
    </location>
</feature>
<feature type="region of interest" description="Disordered" evidence="1">
    <location>
        <begin position="466"/>
        <end position="493"/>
    </location>
</feature>
<feature type="active site" description="Proton donor/acceptor" evidence="1">
    <location>
        <position position="161"/>
    </location>
</feature>
<feature type="active site" description="Proton donor/acceptor" evidence="1">
    <location>
        <position position="220"/>
    </location>
</feature>
<feature type="active site" description="Nucleophile" evidence="1">
    <location>
        <position position="276"/>
    </location>
</feature>
<feature type="binding site" evidence="1">
    <location>
        <begin position="11"/>
        <end position="16"/>
    </location>
    <ligand>
        <name>NAD(+)</name>
        <dbReference type="ChEBI" id="CHEBI:57540"/>
    </ligand>
</feature>
<feature type="binding site" evidence="1">
    <location>
        <position position="36"/>
    </location>
    <ligand>
        <name>NAD(+)</name>
        <dbReference type="ChEBI" id="CHEBI:57540"/>
    </ligand>
</feature>
<feature type="binding site" evidence="1">
    <location>
        <position position="41"/>
    </location>
    <ligand>
        <name>NAD(+)</name>
        <dbReference type="ChEBI" id="CHEBI:57540"/>
    </ligand>
</feature>
<feature type="binding site" evidence="1">
    <location>
        <begin position="89"/>
        <end position="93"/>
    </location>
    <ligand>
        <name>NAD(+)</name>
        <dbReference type="ChEBI" id="CHEBI:57540"/>
    </ligand>
</feature>
<feature type="binding site" evidence="1">
    <location>
        <begin position="130"/>
        <end position="132"/>
    </location>
    <ligand>
        <name>NAD(+)</name>
        <dbReference type="ChEBI" id="CHEBI:57540"/>
    </ligand>
</feature>
<feature type="binding site" evidence="1">
    <location>
        <begin position="161"/>
        <end position="165"/>
    </location>
    <ligand>
        <name>substrate</name>
    </ligand>
</feature>
<feature type="binding site" evidence="1">
    <location>
        <position position="165"/>
    </location>
    <ligand>
        <name>NAD(+)</name>
        <dbReference type="ChEBI" id="CHEBI:57540"/>
    </ligand>
</feature>
<feature type="binding site" evidence="1">
    <location>
        <begin position="220"/>
        <end position="224"/>
    </location>
    <ligand>
        <name>substrate</name>
    </ligand>
</feature>
<feature type="binding site" evidence="1">
    <location>
        <position position="260"/>
    </location>
    <ligand>
        <name>substrate</name>
    </ligand>
</feature>
<feature type="binding site" evidence="1">
    <location>
        <begin position="267"/>
        <end position="273"/>
    </location>
    <ligand>
        <name>substrate</name>
    </ligand>
</feature>
<feature type="binding site" evidence="1">
    <location>
        <begin position="276"/>
        <end position="279"/>
    </location>
    <ligand>
        <name>NAD(+)</name>
        <dbReference type="ChEBI" id="CHEBI:57540"/>
    </ligand>
</feature>
<feature type="binding site" evidence="1">
    <location>
        <begin position="338"/>
        <end position="339"/>
    </location>
    <ligand>
        <name>substrate</name>
    </ligand>
</feature>
<feature type="binding site" evidence="1">
    <location>
        <position position="346"/>
    </location>
    <ligand>
        <name>NAD(+)</name>
        <dbReference type="ChEBI" id="CHEBI:57540"/>
    </ligand>
</feature>
<feature type="binding site" evidence="1">
    <location>
        <position position="442"/>
    </location>
    <ligand>
        <name>substrate</name>
    </ligand>
</feature>
<feature type="modified residue" description="N6-acetyllysine" evidence="1">
    <location>
        <position position="107"/>
    </location>
</feature>
<feature type="modified residue" description="Phosphothreonine" evidence="4">
    <location>
        <position position="474"/>
    </location>
</feature>
<organism>
    <name type="scientific">Rattus norvegicus</name>
    <name type="common">Rat</name>
    <dbReference type="NCBI Taxonomy" id="10116"/>
    <lineage>
        <taxon>Eukaryota</taxon>
        <taxon>Metazoa</taxon>
        <taxon>Chordata</taxon>
        <taxon>Craniata</taxon>
        <taxon>Vertebrata</taxon>
        <taxon>Euteleostomi</taxon>
        <taxon>Mammalia</taxon>
        <taxon>Eutheria</taxon>
        <taxon>Euarchontoglires</taxon>
        <taxon>Glires</taxon>
        <taxon>Rodentia</taxon>
        <taxon>Myomorpha</taxon>
        <taxon>Muroidea</taxon>
        <taxon>Muridae</taxon>
        <taxon>Murinae</taxon>
        <taxon>Rattus</taxon>
    </lineage>
</organism>
<accession>O70199</accession>
<comment type="function">
    <text evidence="1 2">Catalyzes the formation of UDP-alpha-D-glucuronate, a constituent of complex glycosaminoglycans (By similarity). Required for the biosynthesis of chondroitin sulfate and heparan sulfate. Required for embryonic development via its role in the biosynthesis of glycosaminoglycans (By similarity). Required for proper brain and neuronal development (By similarity).</text>
</comment>
<comment type="catalytic activity">
    <reaction evidence="1">
        <text>UDP-alpha-D-glucose + 2 NAD(+) + H2O = UDP-alpha-D-glucuronate + 2 NADH + 3 H(+)</text>
        <dbReference type="Rhea" id="RHEA:23596"/>
        <dbReference type="ChEBI" id="CHEBI:15377"/>
        <dbReference type="ChEBI" id="CHEBI:15378"/>
        <dbReference type="ChEBI" id="CHEBI:57540"/>
        <dbReference type="ChEBI" id="CHEBI:57945"/>
        <dbReference type="ChEBI" id="CHEBI:58052"/>
        <dbReference type="ChEBI" id="CHEBI:58885"/>
        <dbReference type="EC" id="1.1.1.22"/>
    </reaction>
</comment>
<comment type="activity regulation">
    <text evidence="1">UDP-alpha-D-xylose (UDX) acts as a feedback inhibitor. It binds at the same site as the substrate, but functions as allosteric inhibitor by triggering a conformation change that disrupts the active hexameric ring structure and gives rise to an inactive, horseshoe-shaped hexamer.</text>
</comment>
<comment type="pathway">
    <text evidence="1">Nucleotide-sugar biosynthesis; UDP-alpha-D-glucuronate biosynthesis; UDP-alpha-D-glucuronate from UDP-alpha-D-glucose: step 1/1.</text>
</comment>
<comment type="subunit">
    <text evidence="1">Homohexamer.</text>
</comment>
<comment type="domain">
    <text evidence="1">The protein goes through several conformation states during the reaction cycle, giving rise to hysteresis. In the initial state, the ligand-free protein is in an inactive conformation (E*). Substrate binding triggers a change to the active conformation (E). UDP-xylose binding triggers the transition to a distinct, inhibited conformation. The presence of an intrinsically disordered C-terminus promotes a more dynamic protein structure and favors a conformation with high affinity for UPD-xylose.</text>
</comment>
<comment type="domain">
    <text evidence="1">The allosteric switch region moves by about 5 Angstroms when UDP-xylose is bound, and occupies part of the UDP-glucose binding site. At the same time it promotes domain movements that disrupt the active hexameric ring structure and lead to the formation of a horseshoe-shaped, inactive hexamer.</text>
</comment>
<comment type="similarity">
    <text evidence="3">Belongs to the UDP-glucose/GDP-mannose dehydrogenase family.</text>
</comment>
<proteinExistence type="evidence at protein level"/>
<keyword id="KW-0007">Acetylation</keyword>
<keyword id="KW-0021">Allosteric enzyme</keyword>
<keyword id="KW-0119">Carbohydrate metabolism</keyword>
<keyword id="KW-0520">NAD</keyword>
<keyword id="KW-0560">Oxidoreductase</keyword>
<keyword id="KW-0597">Phosphoprotein</keyword>
<keyword id="KW-1185">Reference proteome</keyword>